<dbReference type="EC" id="2.1.2.1" evidence="1"/>
<dbReference type="EMBL" id="BA000003">
    <property type="protein sequence ID" value="BAB12999.1"/>
    <property type="molecule type" value="Genomic_DNA"/>
</dbReference>
<dbReference type="RefSeq" id="NP_240113.1">
    <property type="nucleotide sequence ID" value="NC_002528.1"/>
</dbReference>
<dbReference type="RefSeq" id="WP_010896049.1">
    <property type="nucleotide sequence ID" value="NC_002528.1"/>
</dbReference>
<dbReference type="SMR" id="P57376"/>
<dbReference type="STRING" id="563178.BUAP5A_284"/>
<dbReference type="EnsemblBacteria" id="BAB12999">
    <property type="protein sequence ID" value="BAB12999"/>
    <property type="gene ID" value="BAB12999"/>
</dbReference>
<dbReference type="KEGG" id="buc:BU289"/>
<dbReference type="PATRIC" id="fig|107806.10.peg.299"/>
<dbReference type="eggNOG" id="COG0112">
    <property type="taxonomic scope" value="Bacteria"/>
</dbReference>
<dbReference type="HOGENOM" id="CLU_022477_2_1_6"/>
<dbReference type="UniPathway" id="UPA00193"/>
<dbReference type="UniPathway" id="UPA00288">
    <property type="reaction ID" value="UER01023"/>
</dbReference>
<dbReference type="Proteomes" id="UP000001806">
    <property type="component" value="Chromosome"/>
</dbReference>
<dbReference type="GO" id="GO:0005829">
    <property type="term" value="C:cytosol"/>
    <property type="evidence" value="ECO:0007669"/>
    <property type="project" value="TreeGrafter"/>
</dbReference>
<dbReference type="GO" id="GO:0004372">
    <property type="term" value="F:glycine hydroxymethyltransferase activity"/>
    <property type="evidence" value="ECO:0007669"/>
    <property type="project" value="UniProtKB-UniRule"/>
</dbReference>
<dbReference type="GO" id="GO:0030170">
    <property type="term" value="F:pyridoxal phosphate binding"/>
    <property type="evidence" value="ECO:0007669"/>
    <property type="project" value="UniProtKB-UniRule"/>
</dbReference>
<dbReference type="GO" id="GO:0019264">
    <property type="term" value="P:glycine biosynthetic process from serine"/>
    <property type="evidence" value="ECO:0007669"/>
    <property type="project" value="UniProtKB-UniRule"/>
</dbReference>
<dbReference type="GO" id="GO:0035999">
    <property type="term" value="P:tetrahydrofolate interconversion"/>
    <property type="evidence" value="ECO:0007669"/>
    <property type="project" value="UniProtKB-UniRule"/>
</dbReference>
<dbReference type="CDD" id="cd00378">
    <property type="entry name" value="SHMT"/>
    <property type="match status" value="1"/>
</dbReference>
<dbReference type="FunFam" id="3.40.640.10:FF:000001">
    <property type="entry name" value="Serine hydroxymethyltransferase"/>
    <property type="match status" value="1"/>
</dbReference>
<dbReference type="FunFam" id="3.90.1150.10:FF:000003">
    <property type="entry name" value="Serine hydroxymethyltransferase"/>
    <property type="match status" value="1"/>
</dbReference>
<dbReference type="Gene3D" id="3.90.1150.10">
    <property type="entry name" value="Aspartate Aminotransferase, domain 1"/>
    <property type="match status" value="1"/>
</dbReference>
<dbReference type="Gene3D" id="3.40.640.10">
    <property type="entry name" value="Type I PLP-dependent aspartate aminotransferase-like (Major domain)"/>
    <property type="match status" value="1"/>
</dbReference>
<dbReference type="HAMAP" id="MF_00051">
    <property type="entry name" value="SHMT"/>
    <property type="match status" value="1"/>
</dbReference>
<dbReference type="InterPro" id="IPR015424">
    <property type="entry name" value="PyrdxlP-dep_Trfase"/>
</dbReference>
<dbReference type="InterPro" id="IPR015421">
    <property type="entry name" value="PyrdxlP-dep_Trfase_major"/>
</dbReference>
<dbReference type="InterPro" id="IPR015422">
    <property type="entry name" value="PyrdxlP-dep_Trfase_small"/>
</dbReference>
<dbReference type="InterPro" id="IPR001085">
    <property type="entry name" value="Ser_HO-MeTrfase"/>
</dbReference>
<dbReference type="InterPro" id="IPR049943">
    <property type="entry name" value="Ser_HO-MeTrfase-like"/>
</dbReference>
<dbReference type="InterPro" id="IPR019798">
    <property type="entry name" value="Ser_HO-MeTrfase_PLP_BS"/>
</dbReference>
<dbReference type="InterPro" id="IPR039429">
    <property type="entry name" value="SHMT-like_dom"/>
</dbReference>
<dbReference type="NCBIfam" id="NF000586">
    <property type="entry name" value="PRK00011.1"/>
    <property type="match status" value="1"/>
</dbReference>
<dbReference type="PANTHER" id="PTHR11680">
    <property type="entry name" value="SERINE HYDROXYMETHYLTRANSFERASE"/>
    <property type="match status" value="1"/>
</dbReference>
<dbReference type="PANTHER" id="PTHR11680:SF50">
    <property type="entry name" value="SERINE HYDROXYMETHYLTRANSFERASE"/>
    <property type="match status" value="1"/>
</dbReference>
<dbReference type="Pfam" id="PF00464">
    <property type="entry name" value="SHMT"/>
    <property type="match status" value="1"/>
</dbReference>
<dbReference type="PIRSF" id="PIRSF000412">
    <property type="entry name" value="SHMT"/>
    <property type="match status" value="1"/>
</dbReference>
<dbReference type="SUPFAM" id="SSF53383">
    <property type="entry name" value="PLP-dependent transferases"/>
    <property type="match status" value="1"/>
</dbReference>
<dbReference type="PROSITE" id="PS00096">
    <property type="entry name" value="SHMT"/>
    <property type="match status" value="1"/>
</dbReference>
<accession>P57376</accession>
<reference key="1">
    <citation type="journal article" date="2000" name="Nature">
        <title>Genome sequence of the endocellular bacterial symbiont of aphids Buchnera sp. APS.</title>
        <authorList>
            <person name="Shigenobu S."/>
            <person name="Watanabe H."/>
            <person name="Hattori M."/>
            <person name="Sakaki Y."/>
            <person name="Ishikawa H."/>
        </authorList>
    </citation>
    <scope>NUCLEOTIDE SEQUENCE [LARGE SCALE GENOMIC DNA]</scope>
    <source>
        <strain>APS</strain>
    </source>
</reference>
<feature type="chain" id="PRO_0000113547" description="Serine hydroxymethyltransferase">
    <location>
        <begin position="1"/>
        <end position="417"/>
    </location>
</feature>
<feature type="binding site" evidence="1">
    <location>
        <position position="121"/>
    </location>
    <ligand>
        <name>(6S)-5,6,7,8-tetrahydrofolate</name>
        <dbReference type="ChEBI" id="CHEBI:57453"/>
    </ligand>
</feature>
<feature type="binding site" evidence="1">
    <location>
        <begin position="125"/>
        <end position="127"/>
    </location>
    <ligand>
        <name>(6S)-5,6,7,8-tetrahydrofolate</name>
        <dbReference type="ChEBI" id="CHEBI:57453"/>
    </ligand>
</feature>
<feature type="binding site" evidence="1">
    <location>
        <begin position="355"/>
        <end position="357"/>
    </location>
    <ligand>
        <name>(6S)-5,6,7,8-tetrahydrofolate</name>
        <dbReference type="ChEBI" id="CHEBI:57453"/>
    </ligand>
</feature>
<feature type="site" description="Plays an important role in substrate specificity" evidence="1">
    <location>
        <position position="228"/>
    </location>
</feature>
<feature type="modified residue" description="N6-(pyridoxal phosphate)lysine" evidence="1">
    <location>
        <position position="229"/>
    </location>
</feature>
<name>GLYA_BUCAI</name>
<evidence type="ECO:0000255" key="1">
    <source>
        <dbReference type="HAMAP-Rule" id="MF_00051"/>
    </source>
</evidence>
<keyword id="KW-0028">Amino-acid biosynthesis</keyword>
<keyword id="KW-0963">Cytoplasm</keyword>
<keyword id="KW-0554">One-carbon metabolism</keyword>
<keyword id="KW-0663">Pyridoxal phosphate</keyword>
<keyword id="KW-1185">Reference proteome</keyword>
<keyword id="KW-0808">Transferase</keyword>
<organism>
    <name type="scientific">Buchnera aphidicola subsp. Acyrthosiphon pisum (strain APS)</name>
    <name type="common">Acyrthosiphon pisum symbiotic bacterium</name>
    <dbReference type="NCBI Taxonomy" id="107806"/>
    <lineage>
        <taxon>Bacteria</taxon>
        <taxon>Pseudomonadati</taxon>
        <taxon>Pseudomonadota</taxon>
        <taxon>Gammaproteobacteria</taxon>
        <taxon>Enterobacterales</taxon>
        <taxon>Erwiniaceae</taxon>
        <taxon>Buchnera</taxon>
    </lineage>
</organism>
<comment type="function">
    <text evidence="1">Catalyzes the reversible interconversion of serine and glycine with tetrahydrofolate (THF) serving as the one-carbon carrier. This reaction serves as the major source of one-carbon groups required for the biosynthesis of purines, thymidylate, methionine, and other important biomolecules. Also exhibits THF-independent aldolase activity toward beta-hydroxyamino acids, producing glycine and aldehydes, via a retro-aldol mechanism.</text>
</comment>
<comment type="catalytic activity">
    <reaction evidence="1">
        <text>(6R)-5,10-methylene-5,6,7,8-tetrahydrofolate + glycine + H2O = (6S)-5,6,7,8-tetrahydrofolate + L-serine</text>
        <dbReference type="Rhea" id="RHEA:15481"/>
        <dbReference type="ChEBI" id="CHEBI:15377"/>
        <dbReference type="ChEBI" id="CHEBI:15636"/>
        <dbReference type="ChEBI" id="CHEBI:33384"/>
        <dbReference type="ChEBI" id="CHEBI:57305"/>
        <dbReference type="ChEBI" id="CHEBI:57453"/>
        <dbReference type="EC" id="2.1.2.1"/>
    </reaction>
</comment>
<comment type="cofactor">
    <cofactor evidence="1">
        <name>pyridoxal 5'-phosphate</name>
        <dbReference type="ChEBI" id="CHEBI:597326"/>
    </cofactor>
</comment>
<comment type="pathway">
    <text evidence="1">One-carbon metabolism; tetrahydrofolate interconversion.</text>
</comment>
<comment type="pathway">
    <text evidence="1">Amino-acid biosynthesis; glycine biosynthesis; glycine from L-serine: step 1/1.</text>
</comment>
<comment type="subunit">
    <text evidence="1">Homodimer.</text>
</comment>
<comment type="subcellular location">
    <subcellularLocation>
        <location evidence="1">Cytoplasm</location>
    </subcellularLocation>
</comment>
<comment type="similarity">
    <text evidence="1">Belongs to the SHMT family.</text>
</comment>
<gene>
    <name evidence="1" type="primary">glyA</name>
    <name type="ordered locus">BU289</name>
</gene>
<sequence length="417" mass="46684">MLNNKIDFSKYDPKLWFAIEQEKKRQENHIELIASENYTSNYVMDVQGSQLTNKYAEGYPGKRYYGGCEYVDIIEELAIERAKKLFNADYANVQPHSGSQANFSVYTALLNPGDTILGMKLSHGGHLTHGSSVNFSGKMYNVISYGVDENGEINYEELLRLTKKYKPKMIIGGFSAYSGICNWKKMRFIADNADAYFVVDMAHVAGLVAAGIYPNPINYAHVVTSTTHKTLAGPRGGLILAKNGDDILYKKLNLSVFPGAQGGPLMHVIAAKAIAFKEALEPKFKTYQKQIVKNSKVMVERFLEKGYKIISGHTFNHLFLIDLTNKKITGKDADIILSKANITVNKNTIPNDLKSPFITSGIRIGTAAVTRRGFKENEVSRISDWITSILNNVDDHNNVLQIKKKVLEMCLKYPVYI</sequence>
<proteinExistence type="inferred from homology"/>
<protein>
    <recommendedName>
        <fullName evidence="1">Serine hydroxymethyltransferase</fullName>
        <shortName evidence="1">SHMT</shortName>
        <shortName evidence="1">Serine methylase</shortName>
        <ecNumber evidence="1">2.1.2.1</ecNumber>
    </recommendedName>
</protein>